<dbReference type="EMBL" id="CP001837">
    <property type="protein sequence ID" value="ADC88398.1"/>
    <property type="molecule type" value="Genomic_DNA"/>
</dbReference>
<dbReference type="RefSeq" id="WP_002479441.1">
    <property type="nucleotide sequence ID" value="NC_013893.1"/>
</dbReference>
<dbReference type="SMR" id="D3QFZ3"/>
<dbReference type="KEGG" id="slg:SLGD_02311"/>
<dbReference type="HOGENOM" id="CLU_076075_0_1_9"/>
<dbReference type="GO" id="GO:0005737">
    <property type="term" value="C:cytoplasm"/>
    <property type="evidence" value="ECO:0007669"/>
    <property type="project" value="UniProtKB-SubCell"/>
</dbReference>
<dbReference type="GO" id="GO:0046872">
    <property type="term" value="F:metal ion binding"/>
    <property type="evidence" value="ECO:0007669"/>
    <property type="project" value="UniProtKB-KW"/>
</dbReference>
<dbReference type="GO" id="GO:0030091">
    <property type="term" value="P:protein repair"/>
    <property type="evidence" value="ECO:0007669"/>
    <property type="project" value="UniProtKB-UniRule"/>
</dbReference>
<dbReference type="GO" id="GO:0051409">
    <property type="term" value="P:response to nitrosative stress"/>
    <property type="evidence" value="ECO:0007669"/>
    <property type="project" value="UniProtKB-UniRule"/>
</dbReference>
<dbReference type="GO" id="GO:0006979">
    <property type="term" value="P:response to oxidative stress"/>
    <property type="evidence" value="ECO:0007669"/>
    <property type="project" value="UniProtKB-UniRule"/>
</dbReference>
<dbReference type="Gene3D" id="1.20.120.520">
    <property type="entry name" value="nmb1532 protein domain like"/>
    <property type="match status" value="1"/>
</dbReference>
<dbReference type="Gene3D" id="1.10.3910.10">
    <property type="entry name" value="SP0561-like"/>
    <property type="match status" value="1"/>
</dbReference>
<dbReference type="HAMAP" id="MF_01156">
    <property type="entry name" value="RIC_ScdA"/>
    <property type="match status" value="1"/>
</dbReference>
<dbReference type="InterPro" id="IPR012312">
    <property type="entry name" value="Hemerythrin-like"/>
</dbReference>
<dbReference type="InterPro" id="IPR019903">
    <property type="entry name" value="RIC_family"/>
</dbReference>
<dbReference type="InterPro" id="IPR023551">
    <property type="entry name" value="ScdA"/>
</dbReference>
<dbReference type="InterPro" id="IPR038062">
    <property type="entry name" value="ScdA-like_N_sf"/>
</dbReference>
<dbReference type="NCBIfam" id="TIGR03652">
    <property type="entry name" value="FeS_repair_RIC"/>
    <property type="match status" value="1"/>
</dbReference>
<dbReference type="NCBIfam" id="NF009777">
    <property type="entry name" value="PRK13276.1"/>
    <property type="match status" value="1"/>
</dbReference>
<dbReference type="PANTHER" id="PTHR36438">
    <property type="entry name" value="IRON-SULFUR CLUSTER REPAIR PROTEIN YTFE"/>
    <property type="match status" value="1"/>
</dbReference>
<dbReference type="PANTHER" id="PTHR36438:SF1">
    <property type="entry name" value="IRON-SULFUR CLUSTER REPAIR PROTEIN YTFE"/>
    <property type="match status" value="1"/>
</dbReference>
<dbReference type="Pfam" id="PF01814">
    <property type="entry name" value="Hemerythrin"/>
    <property type="match status" value="1"/>
</dbReference>
<dbReference type="Pfam" id="PF04405">
    <property type="entry name" value="ScdA_N"/>
    <property type="match status" value="1"/>
</dbReference>
<dbReference type="SUPFAM" id="SSF140683">
    <property type="entry name" value="SP0561-like"/>
    <property type="match status" value="1"/>
</dbReference>
<evidence type="ECO:0000255" key="1">
    <source>
        <dbReference type="HAMAP-Rule" id="MF_01156"/>
    </source>
</evidence>
<sequence length="225" mass="25559">MITKETIVAEVVTDYPKAADVFKHAGIDFCCGGAISIEQASQKSKLSLEALLSQLQQLERQSEPGGGLNPKYLSVASLIQYIQAAYHEPLKEELKQLTPYITKVAKVHGPQHDYLIELKALYTQYKNNMTAHTAQEDDHDFPKMIAFSNGQDVAEIEQIILDLKTDHDEVGQILKKMNQLTNDYTIPNEACNTWRLVYQRLQAIEKATYRHVHLENHVLFNKLHA</sequence>
<accession>D3QFZ3</accession>
<reference key="1">
    <citation type="journal article" date="2010" name="J. Bacteriol.">
        <title>Complete genome sequence of Staphylococcus lugdunensis strain HKU09-01.</title>
        <authorList>
            <person name="Tse H."/>
            <person name="Tsoi H.W."/>
            <person name="Leung S.P."/>
            <person name="Lau S.K."/>
            <person name="Woo P.C."/>
            <person name="Yuen K.Y."/>
        </authorList>
    </citation>
    <scope>NUCLEOTIDE SEQUENCE [LARGE SCALE GENOMIC DNA]</scope>
    <source>
        <strain>HKU09-01</strain>
    </source>
</reference>
<proteinExistence type="inferred from homology"/>
<feature type="chain" id="PRO_0000406192" description="Iron-sulfur cluster repair protein ScdA">
    <location>
        <begin position="1"/>
        <end position="225"/>
    </location>
</feature>
<name>SCDA_STALH</name>
<keyword id="KW-0963">Cytoplasm</keyword>
<keyword id="KW-0408">Iron</keyword>
<keyword id="KW-0479">Metal-binding</keyword>
<keyword id="KW-0346">Stress response</keyword>
<protein>
    <recommendedName>
        <fullName evidence="1">Iron-sulfur cluster repair protein ScdA</fullName>
    </recommendedName>
</protein>
<organism>
    <name type="scientific">Staphylococcus lugdunensis (strain HKU09-01)</name>
    <dbReference type="NCBI Taxonomy" id="698737"/>
    <lineage>
        <taxon>Bacteria</taxon>
        <taxon>Bacillati</taxon>
        <taxon>Bacillota</taxon>
        <taxon>Bacilli</taxon>
        <taxon>Bacillales</taxon>
        <taxon>Staphylococcaceae</taxon>
        <taxon>Staphylococcus</taxon>
    </lineage>
</organism>
<comment type="function">
    <text evidence="1">Di-iron-containing protein involved in the repair of iron-sulfur clusters damaged by oxidative and nitrosative stress conditions.</text>
</comment>
<comment type="subunit">
    <text evidence="1">Homodimer.</text>
</comment>
<comment type="subcellular location">
    <subcellularLocation>
        <location evidence="1">Cytoplasm</location>
    </subcellularLocation>
</comment>
<comment type="similarity">
    <text evidence="1">Belongs to the RIC family. ScdA subfamily.</text>
</comment>
<gene>
    <name evidence="1" type="primary">scdA</name>
    <name type="ordered locus">SLGD_02311</name>
</gene>